<evidence type="ECO:0000250" key="1"/>
<evidence type="ECO:0000255" key="2"/>
<evidence type="ECO:0000256" key="3">
    <source>
        <dbReference type="SAM" id="MobiDB-lite"/>
    </source>
</evidence>
<dbReference type="EMBL" id="U21603">
    <property type="protein sequence ID" value="AAA64390.1"/>
    <property type="molecule type" value="Genomic_RNA"/>
</dbReference>
<dbReference type="RefSeq" id="NP_042688.1">
    <property type="nucleotide sequence ID" value="NC_001654.1"/>
</dbReference>
<dbReference type="GlyCosmos" id="Q82857">
    <property type="glycosylation" value="12 sites, No reported glycans"/>
</dbReference>
<dbReference type="GeneID" id="1497401"/>
<dbReference type="Proteomes" id="UP000246436">
    <property type="component" value="Genome"/>
</dbReference>
<dbReference type="GO" id="GO:0020002">
    <property type="term" value="C:host cell plasma membrane"/>
    <property type="evidence" value="ECO:0007669"/>
    <property type="project" value="UniProtKB-SubCell"/>
</dbReference>
<dbReference type="GO" id="GO:0016020">
    <property type="term" value="C:membrane"/>
    <property type="evidence" value="ECO:0007669"/>
    <property type="project" value="UniProtKB-KW"/>
</dbReference>
<dbReference type="GO" id="GO:0019031">
    <property type="term" value="C:viral envelope"/>
    <property type="evidence" value="ECO:0007669"/>
    <property type="project" value="UniProtKB-KW"/>
</dbReference>
<dbReference type="GO" id="GO:0055036">
    <property type="term" value="C:virion membrane"/>
    <property type="evidence" value="ECO:0007669"/>
    <property type="project" value="UniProtKB-SubCell"/>
</dbReference>
<dbReference type="GO" id="GO:0005198">
    <property type="term" value="F:structural molecule activity"/>
    <property type="evidence" value="ECO:0007669"/>
    <property type="project" value="InterPro"/>
</dbReference>
<dbReference type="GO" id="GO:0046718">
    <property type="term" value="P:symbiont entry into host cell"/>
    <property type="evidence" value="ECO:0007669"/>
    <property type="project" value="UniProtKB-KW"/>
</dbReference>
<dbReference type="GO" id="GO:0019062">
    <property type="term" value="P:virion attachment to host cell"/>
    <property type="evidence" value="ECO:0007669"/>
    <property type="project" value="UniProtKB-KW"/>
</dbReference>
<dbReference type="CDD" id="cd09909">
    <property type="entry name" value="HIV-1-like_HR1-HR2"/>
    <property type="match status" value="1"/>
</dbReference>
<dbReference type="InterPro" id="IPR000328">
    <property type="entry name" value="GP41-like"/>
</dbReference>
<dbReference type="Pfam" id="PF05858">
    <property type="entry name" value="BIV_Env"/>
    <property type="match status" value="2"/>
</dbReference>
<feature type="chain" id="PRO_0000272346" description="Envelope glycoprotein">
    <location>
        <begin position="1"/>
        <end position="781"/>
    </location>
</feature>
<feature type="chain" id="PRO_0000272347" description="Surface protein" evidence="1">
    <location>
        <begin position="1"/>
        <end position="422"/>
    </location>
</feature>
<feature type="chain" id="PRO_0000272348" description="Transmembrane protein" evidence="1">
    <location>
        <begin position="423"/>
        <end position="781"/>
    </location>
</feature>
<feature type="topological domain" description="Extracellular" evidence="2">
    <location>
        <begin position="1"/>
        <end position="597"/>
    </location>
</feature>
<feature type="transmembrane region" description="Helical" evidence="2">
    <location>
        <begin position="598"/>
        <end position="618"/>
    </location>
</feature>
<feature type="topological domain" description="Cytoplasmic" evidence="2">
    <location>
        <begin position="619"/>
        <end position="781"/>
    </location>
</feature>
<feature type="region of interest" description="Fusion peptide" evidence="2">
    <location>
        <begin position="423"/>
        <end position="443"/>
    </location>
</feature>
<feature type="region of interest" description="Immunosuppression" evidence="1">
    <location>
        <begin position="482"/>
        <end position="498"/>
    </location>
</feature>
<feature type="region of interest" description="Disordered" evidence="3">
    <location>
        <begin position="634"/>
        <end position="666"/>
    </location>
</feature>
<feature type="compositionally biased region" description="Acidic residues" evidence="3">
    <location>
        <begin position="634"/>
        <end position="644"/>
    </location>
</feature>
<feature type="site" description="Cleavage; by host" evidence="1">
    <location>
        <begin position="422"/>
        <end position="423"/>
    </location>
</feature>
<feature type="glycosylation site" description="N-linked (GlcNAc...) asparagine; by host" evidence="2">
    <location>
        <position position="189"/>
    </location>
</feature>
<feature type="glycosylation site" description="N-linked (GlcNAc...) asparagine; by host" evidence="2">
    <location>
        <position position="212"/>
    </location>
</feature>
<feature type="glycosylation site" description="N-linked (GlcNAc...) asparagine; by host" evidence="2">
    <location>
        <position position="241"/>
    </location>
</feature>
<feature type="glycosylation site" description="N-linked (GlcNAc...) asparagine; by host" evidence="2">
    <location>
        <position position="266"/>
    </location>
</feature>
<feature type="glycosylation site" description="N-linked (GlcNAc...) asparagine; by host" evidence="2">
    <location>
        <position position="285"/>
    </location>
</feature>
<feature type="glycosylation site" description="N-linked (GlcNAc...) asparagine; by host" evidence="2">
    <location>
        <position position="301"/>
    </location>
</feature>
<feature type="glycosylation site" description="N-linked (GlcNAc...) asparagine; by host" evidence="2">
    <location>
        <position position="309"/>
    </location>
</feature>
<feature type="glycosylation site" description="N-linked (GlcNAc...) asparagine; by host" evidence="2">
    <location>
        <position position="382"/>
    </location>
</feature>
<feature type="glycosylation site" description="N-linked (GlcNAc...) asparagine; by host" evidence="2">
    <location>
        <position position="464"/>
    </location>
</feature>
<feature type="glycosylation site" description="N-linked (GlcNAc...) asparagine; by host" evidence="2">
    <location>
        <position position="530"/>
    </location>
</feature>
<feature type="glycosylation site" description="N-linked (GlcNAc...) asparagine; by host" evidence="2">
    <location>
        <position position="535"/>
    </location>
</feature>
<feature type="glycosylation site" description="N-linked (GlcNAc...) asparagine; by host" evidence="2">
    <location>
        <position position="559"/>
    </location>
</feature>
<accession>Q82857</accession>
<organismHost>
    <name type="scientific">Bos javanicus</name>
    <name type="common">Wild banteng</name>
    <dbReference type="NCBI Taxonomy" id="9906"/>
</organismHost>
<organism>
    <name type="scientific">Jembrana disease virus</name>
    <name type="common">JDV</name>
    <dbReference type="NCBI Taxonomy" id="36370"/>
    <lineage>
        <taxon>Viruses</taxon>
        <taxon>Riboviria</taxon>
        <taxon>Pararnavirae</taxon>
        <taxon>Artverviricota</taxon>
        <taxon>Revtraviricetes</taxon>
        <taxon>Ortervirales</taxon>
        <taxon>Retroviridae</taxon>
        <taxon>Orthoretrovirinae</taxon>
        <taxon>Lentivirus</taxon>
    </lineage>
</organism>
<comment type="function">
    <text evidence="1">The surface protein (SU) attaches the virus to the host cell by binding to its receptor. This interaction triggers the refolding of the transmembrane protein (TM) and is thought to activate its fusogenic potential by unmasking its fusion peptide. Fusion occurs at the host cell plasma membrane (By similarity).</text>
</comment>
<comment type="function">
    <text evidence="1">The transmembrane protein (TM) acts as a class I viral fusion protein. Under the current model, the protein has at least 3 conformational states: pre-fusion native state, pre-hairpin intermediate state, and post-fusion hairpin state. During viral and target cell membrane fusion, the coiled coil regions (heptad repeats) assume a trimer-of-hairpins structure, positioning the fusion peptide in close proximity to the C-terminal region of the ectodomain. The formation of this structure appears to drive apposition and subsequent fusion of viral and target cell membranes. Membranes fusion leads to delivery of the nucleocapsid into the cytoplasm (By similarity).</text>
</comment>
<comment type="subunit">
    <text evidence="1">The mature envelope protein (Env) consists of a trimer of SU-TM heterodimers attached by non-covalent interactions or by a labile interchain disulfide bond.</text>
</comment>
<comment type="subcellular location">
    <molecule>Transmembrane protein</molecule>
    <subcellularLocation>
        <location evidence="1">Virion membrane</location>
        <topology evidence="1">Single-pass type I membrane protein</topology>
    </subcellularLocation>
    <subcellularLocation>
        <location evidence="1">Host cell membrane</location>
        <topology evidence="1">Single-pass type I membrane protein</topology>
    </subcellularLocation>
    <text evidence="1">It is probably concentrated at the site of budding and incorporated into the virions possibly by contacts between the cytoplasmic tail of Env and the N-terminus of Gag.</text>
</comment>
<comment type="subcellular location">
    <molecule>Surface protein</molecule>
    <subcellularLocation>
        <location evidence="1">Virion membrane</location>
        <topology evidence="1">Peripheral membrane protein</topology>
    </subcellularLocation>
    <subcellularLocation>
        <location evidence="1">Host cell membrane</location>
        <topology evidence="1">Peripheral membrane protein</topology>
    </subcellularLocation>
    <text evidence="1">The surface protein is not anchored to the viral envelope, but associates with the extravirion surface through its binding to TM. It is probably concentrated at the site of budding and incorporated into the virions possibly by contacts between the cytoplasmic tail of Env and the N-terminus of Gag (By similarity).</text>
</comment>
<comment type="PTM">
    <text evidence="1">Specific enzymatic cleavages in vivo yield mature proteins. Envelope glycoproteins are synthesized as an inactive precursor that is N-glycosylated and processed likely by host cell furin or by a furin-like protease in the Golgi to yield the mature SU and TM proteins. The cleavage site between SU and TM requires the minimal sequence [KR]-X-[KR]-R (By similarity).</text>
</comment>
<reference key="1">
    <citation type="journal article" date="1995" name="J. Gen. Virol.">
        <title>Nucleotide sequence analysis of Jembrana disease virus: a bovine lentivirus associated with an acute disease syndrome.</title>
        <authorList>
            <person name="Chadwick B.J."/>
            <person name="Coelen R.J."/>
            <person name="Wilcox G.E."/>
            <person name="Sammels L.M."/>
            <person name="Kertayadnya G."/>
        </authorList>
    </citation>
    <scope>NUCLEOTIDE SEQUENCE [GENOMIC RNA]</scope>
    <source>
        <strain>Tabanan/87</strain>
    </source>
</reference>
<protein>
    <recommendedName>
        <fullName>Envelope glycoprotein</fullName>
    </recommendedName>
    <alternativeName>
        <fullName>Env polyprotein</fullName>
    </alternativeName>
    <component>
        <recommendedName>
            <fullName>Surface protein</fullName>
            <shortName>SU</shortName>
        </recommendedName>
        <alternativeName>
            <fullName>Glycoprotein 62</fullName>
            <shortName>gp62</shortName>
        </alternativeName>
    </component>
    <component>
        <recommendedName>
            <fullName>Transmembrane protein</fullName>
            <shortName>TM</shortName>
        </recommendedName>
        <alternativeName>
            <fullName>Glycoprotein 40</fullName>
            <shortName>gp40</shortName>
        </alternativeName>
    </component>
</protein>
<gene>
    <name type="primary">env</name>
</gene>
<name>ENV_JEMBR</name>
<proteinExistence type="inferred from homology"/>
<sequence>MMEEGRKEEPEERGEKSTMRDLLQRAVDKGHLTAREALDRWTLEDHGEIHPWIILFCFAGAIGVIGGWGLRGELNVCMLIVLVVLVPIYWGIGEAARNIDSLDWKWIRKVFIVIIFVLVGLLGGCSAQRQHVAMLLSPPGIRLPSTVDIPWFCISNAPIPDCVHWTVQKPDQKHQQIENVMELQEVLDNATFFEVPDLFDRVYLELARLDANSTGVPVNIPPTGISQVKGDCSTGDIQGMNETLSTRGTLGERTFLSIRPGGWFTNTTVWFCVHWPFGFIQRKENLSEGSAQVRNCLDPINVTEPRVANYSYCPLEYKGKNYINKGLKCVGGRVDLSSNPEQHTDLLACGTFCQNFRNCDMVSRDILIGYHPSQQKQHIYINHTFWEQANTQWILVQVPNYGFVPVPDTERPWKGGKPRGKRAVGMVIFLLVLAIMAMTASVTAAATLVKQHATAQVVGRLSTNLTYITKIQNQYLHLFQNLNTRVNNLHHRVTYLEFLAEVHEVQTGLGCVPRGRYCHFDWRPEEVGLNMTLWNSTTWQQWMSYYDQIEENIWNLKYNWSEALEKGKSNTDGLEPDVFRYLADLSSSFTWGSWVDKLVWLAYILLAYFAFKVLQCIMSNLGAQTRYQLLNAQEDTDPAGDGDQPDDHRSGDTPRSGVPSGGWSQKLSEGKKIGCLILRTEWQNWRNDLRTLRWLTLGGKILQLPLSLLVLLVRILLHILSPTFQNQRGWTVGRKGTGGDDRELSPELEYLSWTGSSQEMVEMRDLKEEDIPEEGIRPVEM</sequence>
<keyword id="KW-0165">Cleavage on pair of basic residues</keyword>
<keyword id="KW-0175">Coiled coil</keyword>
<keyword id="KW-1015">Disulfide bond</keyword>
<keyword id="KW-0325">Glycoprotein</keyword>
<keyword id="KW-1032">Host cell membrane</keyword>
<keyword id="KW-1043">Host membrane</keyword>
<keyword id="KW-0945">Host-virus interaction</keyword>
<keyword id="KW-0472">Membrane</keyword>
<keyword id="KW-1185">Reference proteome</keyword>
<keyword id="KW-0812">Transmembrane</keyword>
<keyword id="KW-1133">Transmembrane helix</keyword>
<keyword id="KW-1161">Viral attachment to host cell</keyword>
<keyword id="KW-0261">Viral envelope protein</keyword>
<keyword id="KW-0946">Virion</keyword>
<keyword id="KW-1160">Virus entry into host cell</keyword>